<protein>
    <recommendedName>
        <fullName>Ribulose bisphosphate carboxylase/oxygenase activase 1, chloroplastic</fullName>
        <shortName>RA 1</shortName>
        <shortName>RuBisCO activase 1</shortName>
    </recommendedName>
</protein>
<organism>
    <name type="scientific">Nicotiana tabacum</name>
    <name type="common">Common tobacco</name>
    <dbReference type="NCBI Taxonomy" id="4097"/>
    <lineage>
        <taxon>Eukaryota</taxon>
        <taxon>Viridiplantae</taxon>
        <taxon>Streptophyta</taxon>
        <taxon>Embryophyta</taxon>
        <taxon>Tracheophyta</taxon>
        <taxon>Spermatophyta</taxon>
        <taxon>Magnoliopsida</taxon>
        <taxon>eudicotyledons</taxon>
        <taxon>Gunneridae</taxon>
        <taxon>Pentapetalae</taxon>
        <taxon>asterids</taxon>
        <taxon>lamiids</taxon>
        <taxon>Solanales</taxon>
        <taxon>Solanaceae</taxon>
        <taxon>Nicotianoideae</taxon>
        <taxon>Nicotianeae</taxon>
        <taxon>Nicotiana</taxon>
    </lineage>
</organism>
<dbReference type="EMBL" id="U35111">
    <property type="protein sequence ID" value="AAA78277.1"/>
    <property type="molecule type" value="mRNA"/>
</dbReference>
<dbReference type="EMBL" id="Z14979">
    <property type="protein sequence ID" value="CAA78702.1"/>
    <property type="molecule type" value="mRNA"/>
</dbReference>
<dbReference type="PIR" id="S25482">
    <property type="entry name" value="S25482"/>
</dbReference>
<dbReference type="RefSeq" id="NP_001312984.1">
    <property type="nucleotide sequence ID" value="NM_001326055.1"/>
</dbReference>
<dbReference type="PDB" id="3T15">
    <property type="method" value="X-ray"/>
    <property type="resolution" value="2.95 A"/>
    <property type="chains" value="A=127-419"/>
</dbReference>
<dbReference type="PDB" id="3ZW6">
    <property type="method" value="EM"/>
    <property type="resolution" value="20.00 A"/>
    <property type="chains" value="A/B/C/D/E/F=127-419"/>
</dbReference>
<dbReference type="PDBsum" id="3T15"/>
<dbReference type="PDBsum" id="3ZW6"/>
<dbReference type="EMDB" id="EMD-1940"/>
<dbReference type="SMR" id="Q40460"/>
<dbReference type="DIP" id="DIP-59441N"/>
<dbReference type="STRING" id="4097.Q40460"/>
<dbReference type="PaxDb" id="4097-Q40460"/>
<dbReference type="ProMEX" id="Q40460"/>
<dbReference type="GeneID" id="107819807"/>
<dbReference type="KEGG" id="nta:107819807"/>
<dbReference type="OrthoDB" id="2014558at2759"/>
<dbReference type="EvolutionaryTrace" id="Q40460"/>
<dbReference type="Proteomes" id="UP000084051">
    <property type="component" value="Unplaced"/>
</dbReference>
<dbReference type="GO" id="GO:0009570">
    <property type="term" value="C:chloroplast stroma"/>
    <property type="evidence" value="ECO:0000318"/>
    <property type="project" value="GO_Central"/>
</dbReference>
<dbReference type="GO" id="GO:0005524">
    <property type="term" value="F:ATP binding"/>
    <property type="evidence" value="ECO:0007669"/>
    <property type="project" value="UniProtKB-KW"/>
</dbReference>
<dbReference type="GO" id="GO:0016887">
    <property type="term" value="F:ATP hydrolysis activity"/>
    <property type="evidence" value="ECO:0007669"/>
    <property type="project" value="InterPro"/>
</dbReference>
<dbReference type="GO" id="GO:0042802">
    <property type="term" value="F:identical protein binding"/>
    <property type="evidence" value="ECO:0000353"/>
    <property type="project" value="IntAct"/>
</dbReference>
<dbReference type="GO" id="GO:0046863">
    <property type="term" value="F:ribulose-1,5-bisphosphate carboxylase/oxygenase activator activity"/>
    <property type="evidence" value="ECO:0000318"/>
    <property type="project" value="GO_Central"/>
</dbReference>
<dbReference type="FunFam" id="1.10.8.1070:FF:000001">
    <property type="entry name" value="Ribulose bisphosphate carboxylase/oxygenase activase, chloroplastic"/>
    <property type="match status" value="1"/>
</dbReference>
<dbReference type="FunFam" id="3.40.50.300:FF:000258">
    <property type="entry name" value="Ribulose bisphosphate carboxylase/oxygenase activase, chloroplastic"/>
    <property type="match status" value="1"/>
</dbReference>
<dbReference type="Gene3D" id="1.10.8.1070">
    <property type="match status" value="1"/>
</dbReference>
<dbReference type="Gene3D" id="3.40.50.300">
    <property type="entry name" value="P-loop containing nucleotide triphosphate hydrolases"/>
    <property type="match status" value="1"/>
</dbReference>
<dbReference type="InterPro" id="IPR003959">
    <property type="entry name" value="ATPase_AAA_core"/>
</dbReference>
<dbReference type="InterPro" id="IPR027417">
    <property type="entry name" value="P-loop_NTPase"/>
</dbReference>
<dbReference type="InterPro" id="IPR044960">
    <property type="entry name" value="RCA-like"/>
</dbReference>
<dbReference type="InterPro" id="IPR048571">
    <property type="entry name" value="RuBisCO_activase_AAA_helical"/>
</dbReference>
<dbReference type="PANTHER" id="PTHR32429">
    <property type="match status" value="1"/>
</dbReference>
<dbReference type="PANTHER" id="PTHR32429:SF32">
    <property type="entry name" value="RIBULOSE BISPHOSPHATE CARBOXYLASE_OXYGENASE ACTIVASE, CHLOROPLASTIC"/>
    <property type="match status" value="1"/>
</dbReference>
<dbReference type="Pfam" id="PF00004">
    <property type="entry name" value="AAA"/>
    <property type="match status" value="1"/>
</dbReference>
<dbReference type="Pfam" id="PF21228">
    <property type="entry name" value="RuBisCO_activase_AAA_helical"/>
    <property type="match status" value="1"/>
</dbReference>
<dbReference type="SUPFAM" id="SSF52540">
    <property type="entry name" value="P-loop containing nucleoside triphosphate hydrolases"/>
    <property type="match status" value="1"/>
</dbReference>
<sequence length="442" mass="48754">MATSVSTIGAVNKTPLSLNNSVAGTSVPSTAFFGKTLKKVYGKGVSSPKVTNKSLRIVAEQIDVDPKKQTDSDRWKGLVQDFSDDQQDITRGKGMVDSLFQAPTGTGTHHAVLQSYEYVSQGLRQYNLDNKLDGFYIAPAFMDKLVVHITKNFLKLPNIKVPLILGIWGGKGQGKSFQCELVFRKMGINPIMMSAGELESGNAGEPAKLIRQRYREAAEIIRKGNMCCLFINDLDAGAGRMGGTTQYTVNNQMVNATLMNIADNPTNVQLPGMYNKQENARVPIIVTGNDFSTLYAPLIRDGRMEKFYWAPTREDRIGVCTGIFRTDNVPAEDVVKIVDNFPGQSIDFFGALRARVYDDEVRKWVSGTGIEKIGDKLLNSFDGPPTFEQPKMTIEKLLEYGNMLVQEQENVKRVQLADKYLKEAALGDANADAINNGSFFAS</sequence>
<evidence type="ECO:0000255" key="1"/>
<evidence type="ECO:0000305" key="2"/>
<evidence type="ECO:0007829" key="3">
    <source>
        <dbReference type="PDB" id="3T15"/>
    </source>
</evidence>
<accession>Q40460</accession>
<accession>Q40564</accession>
<name>RCA1_TOBAC</name>
<proteinExistence type="evidence at protein level"/>
<reference key="1">
    <citation type="submission" date="1995-08" db="EMBL/GenBank/DDBJ databases">
        <authorList>
            <person name="Snyder G.W."/>
            <person name="Esau B.D."/>
            <person name="Portis A.R."/>
            <person name="Ogren W.L."/>
        </authorList>
    </citation>
    <scope>NUCLEOTIDE SEQUENCE [MRNA]</scope>
    <source>
        <strain>cv. Petit Havana SR1</strain>
        <tissue>Leaf</tissue>
    </source>
</reference>
<reference key="2">
    <citation type="journal article" date="1993" name="Plant Physiol.">
        <title>Ribulose-1,5-bisphosphate carboxylase/oxygenase activase cDNAs from Nicotiana tabacum.</title>
        <authorList>
            <person name="Qian J."/>
            <person name="Rodermel S."/>
        </authorList>
    </citation>
    <scope>NUCLEOTIDE SEQUENCE [MRNA] OF 237-442</scope>
    <source>
        <strain>cv. SR1</strain>
        <tissue>Leaf</tissue>
    </source>
</reference>
<keyword id="KW-0002">3D-structure</keyword>
<keyword id="KW-0067">ATP-binding</keyword>
<keyword id="KW-0150">Chloroplast</keyword>
<keyword id="KW-0547">Nucleotide-binding</keyword>
<keyword id="KW-0934">Plastid</keyword>
<keyword id="KW-1185">Reference proteome</keyword>
<keyword id="KW-0809">Transit peptide</keyword>
<feature type="transit peptide" description="Chloroplast" evidence="1">
    <location>
        <begin position="1"/>
        <end position="58"/>
    </location>
</feature>
<feature type="chain" id="PRO_0000030242" description="Ribulose bisphosphate carboxylase/oxygenase activase 1, chloroplastic">
    <location>
        <begin position="59"/>
        <end position="442"/>
    </location>
</feature>
<feature type="binding site" evidence="1">
    <location>
        <begin position="169"/>
        <end position="176"/>
    </location>
    <ligand>
        <name>ATP</name>
        <dbReference type="ChEBI" id="CHEBI:30616"/>
    </ligand>
</feature>
<feature type="sequence conflict" description="In Ref. 2; CAA78702." evidence="2" ref="2">
    <original>G</original>
    <variation>E</variation>
    <location>
        <position position="237"/>
    </location>
</feature>
<feature type="helix" evidence="3">
    <location>
        <begin position="139"/>
        <end position="151"/>
    </location>
</feature>
<feature type="strand" evidence="3">
    <location>
        <begin position="163"/>
        <end position="169"/>
    </location>
</feature>
<feature type="helix" evidence="3">
    <location>
        <begin position="175"/>
        <end position="185"/>
    </location>
</feature>
<feature type="strand" evidence="3">
    <location>
        <begin position="191"/>
        <end position="194"/>
    </location>
</feature>
<feature type="helix" evidence="3">
    <location>
        <begin position="195"/>
        <end position="199"/>
    </location>
</feature>
<feature type="helix" evidence="3">
    <location>
        <begin position="205"/>
        <end position="221"/>
    </location>
</feature>
<feature type="strand" evidence="3">
    <location>
        <begin position="229"/>
        <end position="232"/>
    </location>
</feature>
<feature type="helix" evidence="3">
    <location>
        <begin position="251"/>
        <end position="263"/>
    </location>
</feature>
<feature type="strand" evidence="3">
    <location>
        <begin position="284"/>
        <end position="287"/>
    </location>
</feature>
<feature type="helix" evidence="3">
    <location>
        <begin position="297"/>
        <end position="303"/>
    </location>
</feature>
<feature type="strand" evidence="3">
    <location>
        <begin position="304"/>
        <end position="309"/>
    </location>
</feature>
<feature type="helix" evidence="3">
    <location>
        <begin position="313"/>
        <end position="324"/>
    </location>
</feature>
<feature type="helix" evidence="3">
    <location>
        <begin position="325"/>
        <end position="327"/>
    </location>
</feature>
<feature type="helix" evidence="3">
    <location>
        <begin position="331"/>
        <end position="340"/>
    </location>
</feature>
<feature type="helix" evidence="3">
    <location>
        <begin position="346"/>
        <end position="367"/>
    </location>
</feature>
<feature type="helix" evidence="3">
    <location>
        <begin position="374"/>
        <end position="377"/>
    </location>
</feature>
<feature type="helix" evidence="3">
    <location>
        <begin position="394"/>
        <end position="418"/>
    </location>
</feature>
<comment type="function">
    <text>Activation of RuBisCO (ribulose-1,5-bisphosphate carboxylase/oxygenase; EC 4.1.1.39) involves the ATP-dependent carboxylation of the epsilon-amino group of lysine leading to a carbamate structure.</text>
</comment>
<comment type="interaction">
    <interactant intactId="EBI-15950801">
        <id>Q40460</id>
    </interactant>
    <interactant intactId="EBI-15950801">
        <id>Q40460</id>
        <label>-</label>
    </interactant>
    <organismsDiffer>false</organismsDiffer>
    <experiments>2</experiments>
</comment>
<comment type="subcellular location">
    <subcellularLocation>
        <location>Plastid</location>
        <location>Chloroplast stroma</location>
    </subcellularLocation>
</comment>
<comment type="similarity">
    <text evidence="2">Belongs to the RuBisCO activase family.</text>
</comment>